<evidence type="ECO:0000250" key="1"/>
<evidence type="ECO:0000250" key="2">
    <source>
        <dbReference type="UniProtKB" id="P29375"/>
    </source>
</evidence>
<evidence type="ECO:0000250" key="3">
    <source>
        <dbReference type="UniProtKB" id="Q9UGL1"/>
    </source>
</evidence>
<evidence type="ECO:0000255" key="4">
    <source>
        <dbReference type="PROSITE-ProRule" id="PRU00146"/>
    </source>
</evidence>
<evidence type="ECO:0000255" key="5">
    <source>
        <dbReference type="PROSITE-ProRule" id="PRU00355"/>
    </source>
</evidence>
<evidence type="ECO:0000255" key="6">
    <source>
        <dbReference type="PROSITE-ProRule" id="PRU00537"/>
    </source>
</evidence>
<evidence type="ECO:0000255" key="7">
    <source>
        <dbReference type="PROSITE-ProRule" id="PRU00538"/>
    </source>
</evidence>
<evidence type="ECO:0000256" key="8">
    <source>
        <dbReference type="SAM" id="MobiDB-lite"/>
    </source>
</evidence>
<evidence type="ECO:0000269" key="9">
    <source>
    </source>
</evidence>
<evidence type="ECO:0000269" key="10">
    <source>
    </source>
</evidence>
<evidence type="ECO:0000269" key="11">
    <source>
    </source>
</evidence>
<evidence type="ECO:0000269" key="12">
    <source>
    </source>
</evidence>
<evidence type="ECO:0000269" key="13">
    <source>
    </source>
</evidence>
<evidence type="ECO:0000269" key="14">
    <source>
    </source>
</evidence>
<evidence type="ECO:0000269" key="15">
    <source>
    </source>
</evidence>
<evidence type="ECO:0000303" key="16">
    <source ref="2"/>
</evidence>
<evidence type="ECO:0000305" key="17"/>
<evidence type="ECO:0007744" key="18">
    <source>
    </source>
</evidence>
<evidence type="ECO:0007829" key="19">
    <source>
        <dbReference type="PDB" id="2EQY"/>
    </source>
</evidence>
<accession>Q80Y84</accession>
<accession>Q5DTR9</accession>
<accession>Q8BLU1</accession>
<accession>Q8JZL8</accession>
<sequence length="1544" mass="175555">MEPATTLPPGPRPALPLGGPGPLGEFLPPPECPVFEPSWEEFADPFAFIHKIRPIAEQTGICKVRPPPDWQPPFACDVDKLHFTPRIQRLNELEAQTRVKLNFLDQIAKYWELQGSTLKIPHVERKILDLFQLNKLVAEEGGFAVVCKDRKWTKIATKMGFAPGKAVGSHIRGHYERILNPYNLFLSGDSLRCLQKPNLTSDTKDKEYKPHDIPQRQSVQPAETCPPARRAKRMRAEAMNIKIEPEEATEARTHNLRRRMGCTTPKWENEKEMKSTIKQEPTEKKDCELESEKEKPKSRAKKTATAVDLYVCLLCGSGNDEDRLLLCDGCDDSYHTFCLVPPLHDVPKGDWRCPKCLAQECNKPQEAFGFEQAARDYTLRTFGEMADAFKSDYFNMPVHMVPTELVEKEFWRLVSTIEEDVTVEYGADIASKEFGSGFPVRDGKIKISPEEEEYLDSGWNLNNMPVMEQSVLAHITADICGMKLPWLYVGMCFSSFCWHIEDHWSYSINYLHWGEPKTWYGVPGYAAEQLENVMKKLAPELFVSQPDLLHQLVTIMNPNTLMTHEVPVYRTNQCAGEFVITFPRAYHSGFNQGFNFAEAVNFCTVDWLPLGRQCVEHYRLLHRYCVFSHDEMICKMASKADVLDVVVASTVQKDMAIMIEDEKALRETVRKLGVIDSERMDFELLPDDERQCIKCKTTCFMSAISCSCKPGLLVCLHHVKELCSCPPYKYNLRYRYTLDDLYPMMNALKLRAESYNEWALNVNEALEAKINKKKSLVSFKALIEESEMKKFPDNDLLRHLRLVTQDAEKCASVAQQLLNGKRQTRYRSGGGKSQNQLTVNELRQFVTQLYALPCVLSQTPLLKDLLNRVEDFQQQSQKLLSEEMPSAAELQELLDVSFEFDVELPQLTEMRIRLEQARWLEEVQQACLDSSSLSLDDMRRLIDLGVGLAPYSAVEKAMARLQELLTVSEHWDDKAKSLLRARPRHSLSSLATAVKEMEEIPAYLPNGTVLKDSVQRARDWVQDVDALQAGGRVPVLETLIELVARGRSIPVHLNSLPRLEMLVAEVHAWKECAAKTFLPENSTYSLLEVLCPRCDIGLLGLKRKQRKLKEPLPSGKKRSTKLESLSDLERALMESKETAAAMATLGEARLREMEALQSLRFANEEKLLSPVQDLEMKVCLCQKTPATPMIQCELCRDAFHTSCVAAPSISQSSRIWLCPHCRRSEKPPLEKILPLLASLQRIRVRLPEGDALRYMIERTVNWQHRAQQLLSSGNLKLVQDQVGSGLLSSRWPASAGQASATDKVSQPPGTTSFSLPDDWDNRTSYLHSPFSTGQSCLPLHGLSPEVNELLMEAQLLQVSLPEIQELYQTLLTKPSSVQQADRSSPVRSSSEKNDCLRGKRDAINSPERKLKRRPEREGLPSERWDRVKHMRTPQKKKIKLSHPKDMDSFKLERERSYDLVRNAETHSLPSDTSYSEQEDSEDEDAICPAVSCLQPEGDEVDWVQCDGSCNQWFHQVCVGVSPEMAEKEDYICVRCTGKDAPSRK</sequence>
<organism>
    <name type="scientific">Mus musculus</name>
    <name type="common">Mouse</name>
    <dbReference type="NCBI Taxonomy" id="10090"/>
    <lineage>
        <taxon>Eukaryota</taxon>
        <taxon>Metazoa</taxon>
        <taxon>Chordata</taxon>
        <taxon>Craniata</taxon>
        <taxon>Vertebrata</taxon>
        <taxon>Euteleostomi</taxon>
        <taxon>Mammalia</taxon>
        <taxon>Eutheria</taxon>
        <taxon>Euarchontoglires</taxon>
        <taxon>Glires</taxon>
        <taxon>Rodentia</taxon>
        <taxon>Myomorpha</taxon>
        <taxon>Muroidea</taxon>
        <taxon>Muridae</taxon>
        <taxon>Murinae</taxon>
        <taxon>Mus</taxon>
        <taxon>Mus</taxon>
    </lineage>
</organism>
<dbReference type="EC" id="1.14.11.67" evidence="12"/>
<dbReference type="EMBL" id="AY082429">
    <property type="protein sequence ID" value="AAL92848.1"/>
    <property type="molecule type" value="mRNA"/>
</dbReference>
<dbReference type="EMBL" id="AY082430">
    <property type="protein sequence ID" value="AAL92849.1"/>
    <property type="molecule type" value="mRNA"/>
</dbReference>
<dbReference type="EMBL" id="AK220451">
    <property type="protein sequence ID" value="BAD90482.1"/>
    <property type="status" value="ALT_INIT"/>
    <property type="molecule type" value="mRNA"/>
</dbReference>
<dbReference type="EMBL" id="BC048180">
    <property type="protein sequence ID" value="AAH48180.1"/>
    <property type="molecule type" value="mRNA"/>
</dbReference>
<dbReference type="EMBL" id="BC057318">
    <property type="protein sequence ID" value="AAH57318.1"/>
    <property type="molecule type" value="mRNA"/>
</dbReference>
<dbReference type="EMBL" id="AK041304">
    <property type="protein sequence ID" value="BAC30898.1"/>
    <property type="molecule type" value="mRNA"/>
</dbReference>
<dbReference type="CCDS" id="CCDS35716.1">
    <molecule id="Q80Y84-1"/>
</dbReference>
<dbReference type="RefSeq" id="NP_690855.2">
    <molecule id="Q80Y84-1"/>
    <property type="nucleotide sequence ID" value="NM_152895.2"/>
</dbReference>
<dbReference type="PDB" id="2EQY">
    <property type="method" value="NMR"/>
    <property type="chains" value="A=94-208"/>
</dbReference>
<dbReference type="PDBsum" id="2EQY"/>
<dbReference type="BMRB" id="Q80Y84"/>
<dbReference type="SMR" id="Q80Y84"/>
<dbReference type="BioGRID" id="217610">
    <property type="interactions" value="11"/>
</dbReference>
<dbReference type="FunCoup" id="Q80Y84">
    <property type="interactions" value="5432"/>
</dbReference>
<dbReference type="IntAct" id="Q80Y84">
    <property type="interactions" value="4"/>
</dbReference>
<dbReference type="MINT" id="Q80Y84"/>
<dbReference type="STRING" id="10090.ENSMUSP00000038138"/>
<dbReference type="GlyGen" id="Q80Y84">
    <property type="glycosylation" value="1 site, 1 N-linked glycan (1 site)"/>
</dbReference>
<dbReference type="iPTMnet" id="Q80Y84"/>
<dbReference type="PhosphoSitePlus" id="Q80Y84"/>
<dbReference type="PaxDb" id="10090-ENSMUSP00000038138"/>
<dbReference type="PeptideAtlas" id="Q80Y84"/>
<dbReference type="ProteomicsDB" id="263427">
    <molecule id="Q80Y84-1"/>
</dbReference>
<dbReference type="ProteomicsDB" id="263428">
    <molecule id="Q80Y84-2"/>
</dbReference>
<dbReference type="Pumba" id="Q80Y84"/>
<dbReference type="Antibodypedia" id="20655">
    <property type="antibodies" value="395 antibodies from 34 providers"/>
</dbReference>
<dbReference type="DNASU" id="75605"/>
<dbReference type="Ensembl" id="ENSMUST00000047714.14">
    <molecule id="Q80Y84-1"/>
    <property type="protein sequence ID" value="ENSMUSP00000038138.8"/>
    <property type="gene ID" value="ENSMUSG00000042207.18"/>
</dbReference>
<dbReference type="Ensembl" id="ENSMUST00000112198.3">
    <molecule id="Q80Y84-2"/>
    <property type="protein sequence ID" value="ENSMUSP00000107817.2"/>
    <property type="gene ID" value="ENSMUSG00000042207.18"/>
</dbReference>
<dbReference type="GeneID" id="75605"/>
<dbReference type="KEGG" id="mmu:75605"/>
<dbReference type="UCSC" id="uc007csg.2">
    <molecule id="Q80Y84-2"/>
    <property type="organism name" value="mouse"/>
</dbReference>
<dbReference type="UCSC" id="uc011wsg.1">
    <molecule id="Q80Y84-1"/>
    <property type="organism name" value="mouse"/>
</dbReference>
<dbReference type="AGR" id="MGI:1922855"/>
<dbReference type="CTD" id="10765"/>
<dbReference type="MGI" id="MGI:1922855">
    <property type="gene designation" value="Kdm5b"/>
</dbReference>
<dbReference type="VEuPathDB" id="HostDB:ENSMUSG00000042207"/>
<dbReference type="eggNOG" id="KOG1246">
    <property type="taxonomic scope" value="Eukaryota"/>
</dbReference>
<dbReference type="GeneTree" id="ENSGT00940000157076"/>
<dbReference type="HOGENOM" id="CLU_000991_2_2_1"/>
<dbReference type="InParanoid" id="Q80Y84"/>
<dbReference type="OMA" id="PRCDIGM"/>
<dbReference type="OrthoDB" id="1678912at2759"/>
<dbReference type="PhylomeDB" id="Q80Y84"/>
<dbReference type="TreeFam" id="TF106476"/>
<dbReference type="Reactome" id="R-MMU-3214842">
    <property type="pathway name" value="HDMs demethylate histones"/>
</dbReference>
<dbReference type="Reactome" id="R-MMU-8866911">
    <property type="pathway name" value="TFAP2 (AP-2) family regulates transcription of cell cycle factors"/>
</dbReference>
<dbReference type="BioGRID-ORCS" id="75605">
    <property type="hits" value="4 hits in 84 CRISPR screens"/>
</dbReference>
<dbReference type="ChiTaRS" id="Kdm5b">
    <property type="organism name" value="mouse"/>
</dbReference>
<dbReference type="EvolutionaryTrace" id="Q80Y84"/>
<dbReference type="PRO" id="PR:Q80Y84"/>
<dbReference type="Proteomes" id="UP000000589">
    <property type="component" value="Chromosome 1"/>
</dbReference>
<dbReference type="RNAct" id="Q80Y84">
    <property type="molecule type" value="protein"/>
</dbReference>
<dbReference type="Bgee" id="ENSMUSG00000042207">
    <property type="expression patterns" value="Expressed in rostral migratory stream and 280 other cell types or tissues"/>
</dbReference>
<dbReference type="GO" id="GO:0005829">
    <property type="term" value="C:cytosol"/>
    <property type="evidence" value="ECO:0007669"/>
    <property type="project" value="Ensembl"/>
</dbReference>
<dbReference type="GO" id="GO:0005654">
    <property type="term" value="C:nucleoplasm"/>
    <property type="evidence" value="ECO:0000304"/>
    <property type="project" value="Reactome"/>
</dbReference>
<dbReference type="GO" id="GO:0042393">
    <property type="term" value="F:histone binding"/>
    <property type="evidence" value="ECO:0000250"/>
    <property type="project" value="UniProtKB"/>
</dbReference>
<dbReference type="GO" id="GO:0032453">
    <property type="term" value="F:histone H3K4 demethylase activity"/>
    <property type="evidence" value="ECO:0000314"/>
    <property type="project" value="MGI"/>
</dbReference>
<dbReference type="GO" id="GO:0034647">
    <property type="term" value="F:histone H3K4me/H3K4me2/H3K4me3 demethylase activity"/>
    <property type="evidence" value="ECO:0000250"/>
    <property type="project" value="UniProtKB"/>
</dbReference>
<dbReference type="GO" id="GO:1990837">
    <property type="term" value="F:sequence-specific double-stranded DNA binding"/>
    <property type="evidence" value="ECO:0007669"/>
    <property type="project" value="Ensembl"/>
</dbReference>
<dbReference type="GO" id="GO:0003714">
    <property type="term" value="F:transcription corepressor activity"/>
    <property type="evidence" value="ECO:0007669"/>
    <property type="project" value="Ensembl"/>
</dbReference>
<dbReference type="GO" id="GO:0008270">
    <property type="term" value="F:zinc ion binding"/>
    <property type="evidence" value="ECO:0000250"/>
    <property type="project" value="UniProtKB"/>
</dbReference>
<dbReference type="GO" id="GO:0060444">
    <property type="term" value="P:branching involved in mammary gland duct morphogenesis"/>
    <property type="evidence" value="ECO:0000315"/>
    <property type="project" value="MGI"/>
</dbReference>
<dbReference type="GO" id="GO:0044344">
    <property type="term" value="P:cellular response to fibroblast growth factor stimulus"/>
    <property type="evidence" value="ECO:0007669"/>
    <property type="project" value="Ensembl"/>
</dbReference>
<dbReference type="GO" id="GO:1990830">
    <property type="term" value="P:cellular response to leukemia inhibitory factor"/>
    <property type="evidence" value="ECO:0000270"/>
    <property type="project" value="MGI"/>
</dbReference>
<dbReference type="GO" id="GO:0070306">
    <property type="term" value="P:lens fiber cell differentiation"/>
    <property type="evidence" value="ECO:0007669"/>
    <property type="project" value="Ensembl"/>
</dbReference>
<dbReference type="GO" id="GO:0060763">
    <property type="term" value="P:mammary duct terminal end bud growth"/>
    <property type="evidence" value="ECO:0000315"/>
    <property type="project" value="MGI"/>
</dbReference>
<dbReference type="GO" id="GO:0045892">
    <property type="term" value="P:negative regulation of DNA-templated transcription"/>
    <property type="evidence" value="ECO:0000314"/>
    <property type="project" value="UniProtKB"/>
</dbReference>
<dbReference type="GO" id="GO:0010628">
    <property type="term" value="P:positive regulation of gene expression"/>
    <property type="evidence" value="ECO:0000316"/>
    <property type="project" value="MGI"/>
</dbReference>
<dbReference type="GO" id="GO:0033601">
    <property type="term" value="P:positive regulation of mammary gland epithelial cell proliferation"/>
    <property type="evidence" value="ECO:0000315"/>
    <property type="project" value="MGI"/>
</dbReference>
<dbReference type="GO" id="GO:0009791">
    <property type="term" value="P:post-embryonic development"/>
    <property type="evidence" value="ECO:0000315"/>
    <property type="project" value="MGI"/>
</dbReference>
<dbReference type="GO" id="GO:0042752">
    <property type="term" value="P:regulation of circadian rhythm"/>
    <property type="evidence" value="ECO:0000303"/>
    <property type="project" value="UniProtKB"/>
</dbReference>
<dbReference type="GO" id="GO:2000864">
    <property type="term" value="P:regulation of estradiol secretion"/>
    <property type="evidence" value="ECO:0000315"/>
    <property type="project" value="MGI"/>
</dbReference>
<dbReference type="GO" id="GO:0060992">
    <property type="term" value="P:response to fungicide"/>
    <property type="evidence" value="ECO:0007669"/>
    <property type="project" value="Ensembl"/>
</dbReference>
<dbReference type="GO" id="GO:0048511">
    <property type="term" value="P:rhythmic process"/>
    <property type="evidence" value="ECO:0007669"/>
    <property type="project" value="UniProtKB-KW"/>
</dbReference>
<dbReference type="GO" id="GO:0007338">
    <property type="term" value="P:single fertilization"/>
    <property type="evidence" value="ECO:0000315"/>
    <property type="project" value="MGI"/>
</dbReference>
<dbReference type="GO" id="GO:0061038">
    <property type="term" value="P:uterus morphogenesis"/>
    <property type="evidence" value="ECO:0000315"/>
    <property type="project" value="MGI"/>
</dbReference>
<dbReference type="CDD" id="cd16874">
    <property type="entry name" value="ARID_KDM5B"/>
    <property type="match status" value="1"/>
</dbReference>
<dbReference type="CDD" id="cd15603">
    <property type="entry name" value="PHD1_KDM5B"/>
    <property type="match status" value="1"/>
</dbReference>
<dbReference type="CDD" id="cd15687">
    <property type="entry name" value="PHD3_KDM5B"/>
    <property type="match status" value="1"/>
</dbReference>
<dbReference type="FunFam" id="3.30.40.10:FF:000023">
    <property type="entry name" value="Lysine (K)-specific demethylase 5A"/>
    <property type="match status" value="1"/>
</dbReference>
<dbReference type="FunFam" id="3.30.40.10:FF:000200">
    <property type="entry name" value="Lysine-specific demethylase 5B"/>
    <property type="match status" value="1"/>
</dbReference>
<dbReference type="FunFam" id="2.60.120.650:FF:000035">
    <property type="entry name" value="PHD transcription factor Rum1"/>
    <property type="match status" value="1"/>
</dbReference>
<dbReference type="FunFam" id="1.10.150.60:FF:000001">
    <property type="entry name" value="Putative lysine-specific demethylase 5b"/>
    <property type="match status" value="1"/>
</dbReference>
<dbReference type="FunFam" id="2.60.120.650:FF:000001">
    <property type="entry name" value="Putative lysine-specific demethylase 5b"/>
    <property type="match status" value="1"/>
</dbReference>
<dbReference type="Gene3D" id="1.10.150.60">
    <property type="entry name" value="ARID DNA-binding domain"/>
    <property type="match status" value="1"/>
</dbReference>
<dbReference type="Gene3D" id="2.60.120.650">
    <property type="entry name" value="Cupin"/>
    <property type="match status" value="1"/>
</dbReference>
<dbReference type="Gene3D" id="3.30.40.10">
    <property type="entry name" value="Zinc/RING finger domain, C3HC4 (zinc finger)"/>
    <property type="match status" value="3"/>
</dbReference>
<dbReference type="InterPro" id="IPR001606">
    <property type="entry name" value="ARID_dom"/>
</dbReference>
<dbReference type="InterPro" id="IPR036431">
    <property type="entry name" value="ARID_dom_sf"/>
</dbReference>
<dbReference type="InterPro" id="IPR003347">
    <property type="entry name" value="JmjC_dom"/>
</dbReference>
<dbReference type="InterPro" id="IPR003349">
    <property type="entry name" value="JmjN"/>
</dbReference>
<dbReference type="InterPro" id="IPR048615">
    <property type="entry name" value="KDM5_C-hel"/>
</dbReference>
<dbReference type="InterPro" id="IPR047981">
    <property type="entry name" value="KDM5B_ARID"/>
</dbReference>
<dbReference type="InterPro" id="IPR047978">
    <property type="entry name" value="KDM5B_PHD1"/>
</dbReference>
<dbReference type="InterPro" id="IPR047979">
    <property type="entry name" value="KDM5B_PHD3"/>
</dbReference>
<dbReference type="InterPro" id="IPR013637">
    <property type="entry name" value="Lys_sp_deMease-like_dom"/>
</dbReference>
<dbReference type="InterPro" id="IPR019786">
    <property type="entry name" value="Zinc_finger_PHD-type_CS"/>
</dbReference>
<dbReference type="InterPro" id="IPR004198">
    <property type="entry name" value="Znf_C5HC2"/>
</dbReference>
<dbReference type="InterPro" id="IPR011011">
    <property type="entry name" value="Znf_FYVE_PHD"/>
</dbReference>
<dbReference type="InterPro" id="IPR001965">
    <property type="entry name" value="Znf_PHD"/>
</dbReference>
<dbReference type="InterPro" id="IPR019787">
    <property type="entry name" value="Znf_PHD-finger"/>
</dbReference>
<dbReference type="InterPro" id="IPR013083">
    <property type="entry name" value="Znf_RING/FYVE/PHD"/>
</dbReference>
<dbReference type="PANTHER" id="PTHR10694">
    <property type="entry name" value="LYSINE-SPECIFIC DEMETHYLASE"/>
    <property type="match status" value="1"/>
</dbReference>
<dbReference type="PANTHER" id="PTHR10694:SF3">
    <property type="entry name" value="LYSINE-SPECIFIC DEMETHYLASE 5B"/>
    <property type="match status" value="1"/>
</dbReference>
<dbReference type="Pfam" id="PF01388">
    <property type="entry name" value="ARID"/>
    <property type="match status" value="1"/>
</dbReference>
<dbReference type="Pfam" id="PF02373">
    <property type="entry name" value="JmjC"/>
    <property type="match status" value="1"/>
</dbReference>
<dbReference type="Pfam" id="PF02375">
    <property type="entry name" value="JmjN"/>
    <property type="match status" value="1"/>
</dbReference>
<dbReference type="Pfam" id="PF21323">
    <property type="entry name" value="KDM5_C-hel"/>
    <property type="match status" value="1"/>
</dbReference>
<dbReference type="Pfam" id="PF00628">
    <property type="entry name" value="PHD"/>
    <property type="match status" value="3"/>
</dbReference>
<dbReference type="Pfam" id="PF08429">
    <property type="entry name" value="PLU-1"/>
    <property type="match status" value="1"/>
</dbReference>
<dbReference type="Pfam" id="PF02928">
    <property type="entry name" value="zf-C5HC2"/>
    <property type="match status" value="1"/>
</dbReference>
<dbReference type="SMART" id="SM01014">
    <property type="entry name" value="ARID"/>
    <property type="match status" value="1"/>
</dbReference>
<dbReference type="SMART" id="SM00501">
    <property type="entry name" value="BRIGHT"/>
    <property type="match status" value="1"/>
</dbReference>
<dbReference type="SMART" id="SM00558">
    <property type="entry name" value="JmjC"/>
    <property type="match status" value="1"/>
</dbReference>
<dbReference type="SMART" id="SM00545">
    <property type="entry name" value="JmjN"/>
    <property type="match status" value="1"/>
</dbReference>
<dbReference type="SMART" id="SM00249">
    <property type="entry name" value="PHD"/>
    <property type="match status" value="3"/>
</dbReference>
<dbReference type="SUPFAM" id="SSF46774">
    <property type="entry name" value="ARID-like"/>
    <property type="match status" value="1"/>
</dbReference>
<dbReference type="SUPFAM" id="SSF51197">
    <property type="entry name" value="Clavaminate synthase-like"/>
    <property type="match status" value="1"/>
</dbReference>
<dbReference type="SUPFAM" id="SSF57903">
    <property type="entry name" value="FYVE/PHD zinc finger"/>
    <property type="match status" value="3"/>
</dbReference>
<dbReference type="PROSITE" id="PS51011">
    <property type="entry name" value="ARID"/>
    <property type="match status" value="1"/>
</dbReference>
<dbReference type="PROSITE" id="PS51184">
    <property type="entry name" value="JMJC"/>
    <property type="match status" value="1"/>
</dbReference>
<dbReference type="PROSITE" id="PS51183">
    <property type="entry name" value="JMJN"/>
    <property type="match status" value="1"/>
</dbReference>
<dbReference type="PROSITE" id="PS01359">
    <property type="entry name" value="ZF_PHD_1"/>
    <property type="match status" value="2"/>
</dbReference>
<dbReference type="PROSITE" id="PS50016">
    <property type="entry name" value="ZF_PHD_2"/>
    <property type="match status" value="3"/>
</dbReference>
<proteinExistence type="evidence at protein level"/>
<comment type="function">
    <text evidence="12 13 14">Histone demethylase that demethylates 'Lys-4' of histone H3, thereby playing a central role in histone code. Does not demethylate histone H3 'Lys-9' or H3 'Lys-27'. Demethylates trimethylated, dimethylated and monomethylated H3 'Lys-4'. Acts as a transcriptional corepressor for FOXG1B and PAX9. Represses the CLOCK-BMAL1 heterodimer-mediated transcriptional activation of the core clock component PER2.</text>
</comment>
<comment type="catalytic activity">
    <reaction evidence="12">
        <text>N(6),N(6),N(6)-trimethyl-L-lysyl(4)-[histone H3] + 3 2-oxoglutarate + 3 O2 = L-lysyl(4)-[histone H3] + 3 formaldehyde + 3 succinate + 3 CO2</text>
        <dbReference type="Rhea" id="RHEA:60208"/>
        <dbReference type="Rhea" id="RHEA-COMP:15537"/>
        <dbReference type="Rhea" id="RHEA-COMP:15547"/>
        <dbReference type="ChEBI" id="CHEBI:15379"/>
        <dbReference type="ChEBI" id="CHEBI:16526"/>
        <dbReference type="ChEBI" id="CHEBI:16810"/>
        <dbReference type="ChEBI" id="CHEBI:16842"/>
        <dbReference type="ChEBI" id="CHEBI:29969"/>
        <dbReference type="ChEBI" id="CHEBI:30031"/>
        <dbReference type="ChEBI" id="CHEBI:61961"/>
        <dbReference type="EC" id="1.14.11.67"/>
    </reaction>
</comment>
<comment type="cofactor">
    <cofactor evidence="1">
        <name>Fe(2+)</name>
        <dbReference type="ChEBI" id="CHEBI:29033"/>
    </cofactor>
    <text evidence="1">Binds 1 Fe(2+) ion per subunit.</text>
</comment>
<comment type="subunit">
    <text evidence="3">Interacts with FOXG1B, PAX9, MYC, MYCN and RB1. Interacts with HDAC1, HDAC4, HDAC5 and HDAC7. Interacts (via PHD-type 1 zinc finger) with histone H3 unmodified at 'Lys-4'; the interaction is inhibited when histone H3 is methylated at 'Arg-2' or 'Lys-4' (By similarity).</text>
</comment>
<comment type="interaction">
    <interactant intactId="EBI-1249551">
        <id>Q80Y84</id>
    </interactant>
    <interactant intactId="EBI-2943018">
        <id>P60762</id>
        <label>Morf4l1</label>
    </interactant>
    <organismsDiffer>false</organismsDiffer>
    <experiments>4</experiments>
</comment>
<comment type="subcellular location">
    <subcellularLocation>
        <location evidence="5 6 11">Nucleus</location>
    </subcellularLocation>
</comment>
<comment type="alternative products">
    <event type="alternative splicing"/>
    <isoform>
        <id>Q80Y84-1</id>
        <name>1</name>
        <sequence type="displayed"/>
    </isoform>
    <isoform>
        <id>Q80Y84-2</id>
        <name>2</name>
        <sequence type="described" ref="VSP_026409"/>
    </isoform>
</comment>
<comment type="tissue specificity">
    <text evidence="9 10 11">Present at highest levels in testis, where it is enriched in spermatogonia and pachytene cells (at protein level).</text>
</comment>
<comment type="developmental stage">
    <text evidence="10">Expressed in developing brain, mammary bud, thymus, teeth, whisker follicle, intervertebral disks, olfactory epithelium, eye, stomach and limbs.</text>
</comment>
<comment type="domain">
    <text evidence="3">Both the JmjC domain and the JmjN domain are required for enzymatic activity. However ARID and PHD-type 1 domain are not required for activity per se but contributed to recognition of the H3(1-21)K4me2 substrate peptide.</text>
</comment>
<comment type="domain">
    <text evidence="1">The 2 first PHD-type zinc finger domains are required for transcription repression activity.</text>
</comment>
<comment type="disruption phenotype">
    <text evidence="15">Homozygous KDM5B-null mice are subviable, exhibit vertebral patterning defects, and manifest numerous behavioral abnormalities including increased anxiety, less sociability, and reduced long-term memory compared with that of wild-types. Heterozygous mice appear normal.</text>
</comment>
<comment type="similarity">
    <text evidence="17">Belongs to the JARID1 histone demethylase family.</text>
</comment>
<comment type="sequence caution" evidence="17">
    <conflict type="erroneous initiation">
        <sequence resource="EMBL-CDS" id="BAD90482"/>
    </conflict>
    <text>Extended N-terminus.</text>
</comment>
<reference key="1">
    <citation type="journal article" date="2002" name="Mech. Dev.">
        <title>Characterisation and developmental expression of mouse Plu-1, a homologue of a human nuclear protein (PLU-1) which is specifically up-regulated in breast cancer.</title>
        <authorList>
            <person name="Madsen B."/>
            <person name="Spencer-Dene B."/>
            <person name="Poulsom R."/>
            <person name="Hall D."/>
            <person name="Lu P.J."/>
            <person name="Scott K."/>
            <person name="Shaw A.T."/>
            <person name="Burchell J.M."/>
            <person name="Freemont P."/>
            <person name="Taylor-Papadimitriou J."/>
        </authorList>
    </citation>
    <scope>NUCLEOTIDE SEQUENCE [MRNA] (ISOFORM 1)</scope>
    <scope>TISSUE SPECIFICITY</scope>
    <scope>DEVELOPMENTAL STAGE</scope>
    <source>
        <strain>BALB/cJ</strain>
        <tissue>Testis</tissue>
    </source>
</reference>
<reference key="2">
    <citation type="submission" date="2005-02" db="EMBL/GenBank/DDBJ databases">
        <title>Prediction of the coding sequences of mouse homologues of KIAA gene. The complete nucleotide sequences of mouse KIAA-homologous cDNAs identified by screening of terminal sequences of cDNA clones randomly sampled from size-fractionated libraries.</title>
        <authorList>
            <person name="Okazaki N."/>
            <person name="Kikuno R.F."/>
            <person name="Ohara R."/>
            <person name="Inamoto S."/>
            <person name="Nagase T."/>
            <person name="Ohara O."/>
            <person name="Koga H."/>
        </authorList>
    </citation>
    <scope>NUCLEOTIDE SEQUENCE [LARGE SCALE MRNA] (ISOFORM 2)</scope>
    <source>
        <tissue>Brain</tissue>
    </source>
</reference>
<reference key="3">
    <citation type="journal article" date="2004" name="Genome Res.">
        <title>The status, quality, and expansion of the NIH full-length cDNA project: the Mammalian Gene Collection (MGC).</title>
        <authorList>
            <consortium name="The MGC Project Team"/>
        </authorList>
    </citation>
    <scope>NUCLEOTIDE SEQUENCE [LARGE SCALE MRNA] (ISOFORM 1)</scope>
    <source>
        <strain>C57BL/6J</strain>
        <tissue>Brain</tissue>
    </source>
</reference>
<reference key="4">
    <citation type="journal article" date="2005" name="Science">
        <title>The transcriptional landscape of the mammalian genome.</title>
        <authorList>
            <person name="Carninci P."/>
            <person name="Kasukawa T."/>
            <person name="Katayama S."/>
            <person name="Gough J."/>
            <person name="Frith M.C."/>
            <person name="Maeda N."/>
            <person name="Oyama R."/>
            <person name="Ravasi T."/>
            <person name="Lenhard B."/>
            <person name="Wells C."/>
            <person name="Kodzius R."/>
            <person name="Shimokawa K."/>
            <person name="Bajic V.B."/>
            <person name="Brenner S.E."/>
            <person name="Batalov S."/>
            <person name="Forrest A.R."/>
            <person name="Zavolan M."/>
            <person name="Davis M.J."/>
            <person name="Wilming L.G."/>
            <person name="Aidinis V."/>
            <person name="Allen J.E."/>
            <person name="Ambesi-Impiombato A."/>
            <person name="Apweiler R."/>
            <person name="Aturaliya R.N."/>
            <person name="Bailey T.L."/>
            <person name="Bansal M."/>
            <person name="Baxter L."/>
            <person name="Beisel K.W."/>
            <person name="Bersano T."/>
            <person name="Bono H."/>
            <person name="Chalk A.M."/>
            <person name="Chiu K.P."/>
            <person name="Choudhary V."/>
            <person name="Christoffels A."/>
            <person name="Clutterbuck D.R."/>
            <person name="Crowe M.L."/>
            <person name="Dalla E."/>
            <person name="Dalrymple B.P."/>
            <person name="de Bono B."/>
            <person name="Della Gatta G."/>
            <person name="di Bernardo D."/>
            <person name="Down T."/>
            <person name="Engstrom P."/>
            <person name="Fagiolini M."/>
            <person name="Faulkner G."/>
            <person name="Fletcher C.F."/>
            <person name="Fukushima T."/>
            <person name="Furuno M."/>
            <person name="Futaki S."/>
            <person name="Gariboldi M."/>
            <person name="Georgii-Hemming P."/>
            <person name="Gingeras T.R."/>
            <person name="Gojobori T."/>
            <person name="Green R.E."/>
            <person name="Gustincich S."/>
            <person name="Harbers M."/>
            <person name="Hayashi Y."/>
            <person name="Hensch T.K."/>
            <person name="Hirokawa N."/>
            <person name="Hill D."/>
            <person name="Huminiecki L."/>
            <person name="Iacono M."/>
            <person name="Ikeo K."/>
            <person name="Iwama A."/>
            <person name="Ishikawa T."/>
            <person name="Jakt M."/>
            <person name="Kanapin A."/>
            <person name="Katoh M."/>
            <person name="Kawasawa Y."/>
            <person name="Kelso J."/>
            <person name="Kitamura H."/>
            <person name="Kitano H."/>
            <person name="Kollias G."/>
            <person name="Krishnan S.P."/>
            <person name="Kruger A."/>
            <person name="Kummerfeld S.K."/>
            <person name="Kurochkin I.V."/>
            <person name="Lareau L.F."/>
            <person name="Lazarevic D."/>
            <person name="Lipovich L."/>
            <person name="Liu J."/>
            <person name="Liuni S."/>
            <person name="McWilliam S."/>
            <person name="Madan Babu M."/>
            <person name="Madera M."/>
            <person name="Marchionni L."/>
            <person name="Matsuda H."/>
            <person name="Matsuzawa S."/>
            <person name="Miki H."/>
            <person name="Mignone F."/>
            <person name="Miyake S."/>
            <person name="Morris K."/>
            <person name="Mottagui-Tabar S."/>
            <person name="Mulder N."/>
            <person name="Nakano N."/>
            <person name="Nakauchi H."/>
            <person name="Ng P."/>
            <person name="Nilsson R."/>
            <person name="Nishiguchi S."/>
            <person name="Nishikawa S."/>
            <person name="Nori F."/>
            <person name="Ohara O."/>
            <person name="Okazaki Y."/>
            <person name="Orlando V."/>
            <person name="Pang K.C."/>
            <person name="Pavan W.J."/>
            <person name="Pavesi G."/>
            <person name="Pesole G."/>
            <person name="Petrovsky N."/>
            <person name="Piazza S."/>
            <person name="Reed J."/>
            <person name="Reid J.F."/>
            <person name="Ring B.Z."/>
            <person name="Ringwald M."/>
            <person name="Rost B."/>
            <person name="Ruan Y."/>
            <person name="Salzberg S.L."/>
            <person name="Sandelin A."/>
            <person name="Schneider C."/>
            <person name="Schoenbach C."/>
            <person name="Sekiguchi K."/>
            <person name="Semple C.A."/>
            <person name="Seno S."/>
            <person name="Sessa L."/>
            <person name="Sheng Y."/>
            <person name="Shibata Y."/>
            <person name="Shimada H."/>
            <person name="Shimada K."/>
            <person name="Silva D."/>
            <person name="Sinclair B."/>
            <person name="Sperling S."/>
            <person name="Stupka E."/>
            <person name="Sugiura K."/>
            <person name="Sultana R."/>
            <person name="Takenaka Y."/>
            <person name="Taki K."/>
            <person name="Tammoja K."/>
            <person name="Tan S.L."/>
            <person name="Tang S."/>
            <person name="Taylor M.S."/>
            <person name="Tegner J."/>
            <person name="Teichmann S.A."/>
            <person name="Ueda H.R."/>
            <person name="van Nimwegen E."/>
            <person name="Verardo R."/>
            <person name="Wei C.L."/>
            <person name="Yagi K."/>
            <person name="Yamanishi H."/>
            <person name="Zabarovsky E."/>
            <person name="Zhu S."/>
            <person name="Zimmer A."/>
            <person name="Hide W."/>
            <person name="Bult C."/>
            <person name="Grimmond S.M."/>
            <person name="Teasdale R.D."/>
            <person name="Liu E.T."/>
            <person name="Brusic V."/>
            <person name="Quackenbush J."/>
            <person name="Wahlestedt C."/>
            <person name="Mattick J.S."/>
            <person name="Hume D.A."/>
            <person name="Kai C."/>
            <person name="Sasaki D."/>
            <person name="Tomaru Y."/>
            <person name="Fukuda S."/>
            <person name="Kanamori-Katayama M."/>
            <person name="Suzuki M."/>
            <person name="Aoki J."/>
            <person name="Arakawa T."/>
            <person name="Iida J."/>
            <person name="Imamura K."/>
            <person name="Itoh M."/>
            <person name="Kato T."/>
            <person name="Kawaji H."/>
            <person name="Kawagashira N."/>
            <person name="Kawashima T."/>
            <person name="Kojima M."/>
            <person name="Kondo S."/>
            <person name="Konno H."/>
            <person name="Nakano K."/>
            <person name="Ninomiya N."/>
            <person name="Nishio T."/>
            <person name="Okada M."/>
            <person name="Plessy C."/>
            <person name="Shibata K."/>
            <person name="Shiraki T."/>
            <person name="Suzuki S."/>
            <person name="Tagami M."/>
            <person name="Waki K."/>
            <person name="Watahiki A."/>
            <person name="Okamura-Oho Y."/>
            <person name="Suzuki H."/>
            <person name="Kawai J."/>
            <person name="Hayashizaki Y."/>
        </authorList>
    </citation>
    <scope>NUCLEOTIDE SEQUENCE [LARGE SCALE MRNA] OF 1-1433</scope>
    <source>
        <strain>C57BL/6J</strain>
        <tissue>Aorta</tissue>
    </source>
</reference>
<reference key="5">
    <citation type="journal article" date="2002" name="Int. J. Cancer">
        <title>PLU-1 nuclear protein, which is upregulated in breast cancer, shows restricted expression in normal human adult tissues: a new cancer/testis antigen?</title>
        <authorList>
            <person name="Barrett A."/>
            <person name="Madsen B."/>
            <person name="Copier J."/>
            <person name="Lu P.J."/>
            <person name="Cooper L."/>
            <person name="Scibetta A.G."/>
            <person name="Burchell J."/>
            <person name="Taylor-Papadimitriou J."/>
        </authorList>
    </citation>
    <scope>TISSUE SPECIFICITY</scope>
</reference>
<reference key="6">
    <citation type="journal article" date="2003" name="Chromosoma">
        <title>PLU-1, a transcriptional repressor and putative testis-cancer antigen, has a specific expression and localisation pattern during meiosis.</title>
        <authorList>
            <person name="Madsen B."/>
            <person name="Tarsounas M."/>
            <person name="Burchell J.M."/>
            <person name="Hall D."/>
            <person name="Poulsom R."/>
            <person name="Taylor-Papadimitriou J."/>
        </authorList>
    </citation>
    <scope>TISSUE SPECIFICITY</scope>
    <scope>SUBCELLULAR LOCATION</scope>
</reference>
<reference key="7">
    <citation type="journal article" date="2007" name="Cell">
        <title>The X-linked mental retardation gene SMCX/JARID1C defines a family of histone H3 lysine 4 demethylases.</title>
        <authorList>
            <person name="Iwase S."/>
            <person name="Lan F."/>
            <person name="Bayliss P."/>
            <person name="de la Torre-Ubieta L."/>
            <person name="Huarte M."/>
            <person name="Qi H.H."/>
            <person name="Whetstine J.R."/>
            <person name="Bonni A."/>
            <person name="Roberts T.M."/>
            <person name="Shi Y."/>
        </authorList>
    </citation>
    <scope>FUNCTION</scope>
</reference>
<reference key="8">
    <citation type="journal article" date="2007" name="Nat. Struct. Mol. Biol.">
        <title>Demethylation of trimethylated histone H3 Lys4 in vivo by JARID1 JmjC proteins.</title>
        <authorList>
            <person name="Seward D.J."/>
            <person name="Cubberley G."/>
            <person name="Kim S."/>
            <person name="Schonewald M."/>
            <person name="Zhang L."/>
            <person name="Tripet B."/>
            <person name="Bentley D.L."/>
        </authorList>
    </citation>
    <scope>FUNCTION</scope>
    <scope>CATALYTIC ACTIVITY</scope>
    <scope>MUTAGENESIS OF HIS-499</scope>
</reference>
<reference key="9">
    <citation type="journal article" date="2011" name="Science">
        <title>Histone lysine demethylase JARID1a activates CLOCK-BMAL1 and influences the circadian clock.</title>
        <authorList>
            <person name="DiTacchio L."/>
            <person name="Le H.D."/>
            <person name="Vollmers C."/>
            <person name="Hatori M."/>
            <person name="Witcher M."/>
            <person name="Secombe J."/>
            <person name="Panda S."/>
        </authorList>
    </citation>
    <scope>FUNCTION</scope>
</reference>
<reference key="10">
    <citation type="journal article" date="2013" name="Mol. Cell">
        <title>SIRT5-mediated lysine desuccinylation impacts diverse metabolic pathways.</title>
        <authorList>
            <person name="Park J."/>
            <person name="Chen Y."/>
            <person name="Tishkoff D.X."/>
            <person name="Peng C."/>
            <person name="Tan M."/>
            <person name="Dai L."/>
            <person name="Xie Z."/>
            <person name="Zhang Y."/>
            <person name="Zwaans B.M."/>
            <person name="Skinner M.E."/>
            <person name="Lombard D.B."/>
            <person name="Zhao Y."/>
        </authorList>
    </citation>
    <scope>ACETYLATION [LARGE SCALE ANALYSIS] AT LYS-832</scope>
    <scope>IDENTIFICATION BY MASS SPECTROMETRY [LARGE SCALE ANALYSIS]</scope>
    <source>
        <tissue>Embryonic fibroblast</tissue>
    </source>
</reference>
<reference key="11">
    <citation type="journal article" date="2018" name="Science">
        <title>Quantifying the contribution of recessive coding variation to developmental disorders.</title>
        <authorList>
            <consortium name="Deciphering Developmental Disorders Study"/>
            <person name="Martin H.C."/>
            <person name="Jones W.D."/>
            <person name="McIntyre R."/>
            <person name="Sanchez-Andrade G."/>
            <person name="Sanderson M."/>
            <person name="Stephenson J.D."/>
            <person name="Jones C.P."/>
            <person name="Handsaker J."/>
            <person name="Gallone G."/>
            <person name="Bruntraeger M."/>
            <person name="McRae J.F."/>
            <person name="Prigmore E."/>
            <person name="Short P."/>
            <person name="Niemi M."/>
            <person name="Kaplanis J."/>
            <person name="Radford E.J."/>
            <person name="Akawi N."/>
            <person name="Balasubramanian M."/>
            <person name="Dean J."/>
            <person name="Horton R."/>
            <person name="Hulbert A."/>
            <person name="Johnson D.S."/>
            <person name="Johnson K."/>
            <person name="Kumar D."/>
            <person name="Lynch S.A."/>
            <person name="Mehta S.G."/>
            <person name="Morton J."/>
            <person name="Parker M.J."/>
            <person name="Splitt M."/>
            <person name="Turnpenny P.D."/>
            <person name="Vasudevan P.C."/>
            <person name="Wright M."/>
            <person name="Bassett A."/>
            <person name="Gerety S.S."/>
            <person name="Wright C.F."/>
            <person name="FitzPatrick D.R."/>
            <person name="Firth H.V."/>
            <person name="Hurles M.E."/>
            <person name="Barrett J.C."/>
        </authorList>
    </citation>
    <scope>DISRUPTION PHENOTYPE</scope>
</reference>
<keyword id="KW-0002">3D-structure</keyword>
<keyword id="KW-0007">Acetylation</keyword>
<keyword id="KW-0025">Alternative splicing</keyword>
<keyword id="KW-0090">Biological rhythms</keyword>
<keyword id="KW-0156">Chromatin regulator</keyword>
<keyword id="KW-0223">Dioxygenase</keyword>
<keyword id="KW-0408">Iron</keyword>
<keyword id="KW-1017">Isopeptide bond</keyword>
<keyword id="KW-0479">Metal-binding</keyword>
<keyword id="KW-0539">Nucleus</keyword>
<keyword id="KW-0560">Oxidoreductase</keyword>
<keyword id="KW-0597">Phosphoprotein</keyword>
<keyword id="KW-1185">Reference proteome</keyword>
<keyword id="KW-0677">Repeat</keyword>
<keyword id="KW-0678">Repressor</keyword>
<keyword id="KW-0804">Transcription</keyword>
<keyword id="KW-0805">Transcription regulation</keyword>
<keyword id="KW-0832">Ubl conjugation</keyword>
<keyword id="KW-0862">Zinc</keyword>
<keyword id="KW-0863">Zinc-finger</keyword>
<name>KDM5B_MOUSE</name>
<gene>
    <name type="primary">Kdm5b</name>
    <name type="synonym">Jarid1b</name>
    <name type="synonym">Kiaa4034</name>
    <name type="synonym">Plu1</name>
</gene>
<feature type="chain" id="PRO_0000292413" description="Lysine-specific demethylase 5B">
    <location>
        <begin position="1"/>
        <end position="1544"/>
    </location>
</feature>
<feature type="domain" description="JmjN" evidence="6">
    <location>
        <begin position="32"/>
        <end position="73"/>
    </location>
</feature>
<feature type="domain" description="ARID" evidence="5">
    <location>
        <begin position="97"/>
        <end position="187"/>
    </location>
</feature>
<feature type="domain" description="JmjC" evidence="7">
    <location>
        <begin position="453"/>
        <end position="619"/>
    </location>
</feature>
<feature type="zinc finger region" description="PHD-type 1" evidence="4">
    <location>
        <begin position="309"/>
        <end position="359"/>
    </location>
</feature>
<feature type="zinc finger region" description="C5HC2" evidence="3">
    <location>
        <begin position="692"/>
        <end position="744"/>
    </location>
</feature>
<feature type="zinc finger region" description="PHD-type 2" evidence="4">
    <location>
        <begin position="1176"/>
        <end position="1224"/>
    </location>
</feature>
<feature type="zinc finger region" description="PHD-type 3" evidence="4">
    <location>
        <begin position="1484"/>
        <end position="1538"/>
    </location>
</feature>
<feature type="region of interest" description="Disordered" evidence="8">
    <location>
        <begin position="1"/>
        <end position="22"/>
    </location>
</feature>
<feature type="region of interest" description="Disordered" evidence="8">
    <location>
        <begin position="200"/>
        <end position="228"/>
    </location>
</feature>
<feature type="region of interest" description="Disordered" evidence="8">
    <location>
        <begin position="269"/>
        <end position="297"/>
    </location>
</feature>
<feature type="region of interest" description="Disordered" evidence="8">
    <location>
        <begin position="1297"/>
        <end position="1318"/>
    </location>
</feature>
<feature type="region of interest" description="Disordered" evidence="8">
    <location>
        <begin position="1374"/>
        <end position="1447"/>
    </location>
</feature>
<feature type="compositionally biased region" description="Pro residues" evidence="8">
    <location>
        <begin position="1"/>
        <end position="14"/>
    </location>
</feature>
<feature type="compositionally biased region" description="Basic and acidic residues" evidence="8">
    <location>
        <begin position="202"/>
        <end position="214"/>
    </location>
</feature>
<feature type="compositionally biased region" description="Polar residues" evidence="8">
    <location>
        <begin position="1297"/>
        <end position="1314"/>
    </location>
</feature>
<feature type="compositionally biased region" description="Polar residues" evidence="8">
    <location>
        <begin position="1374"/>
        <end position="1388"/>
    </location>
</feature>
<feature type="compositionally biased region" description="Basic and acidic residues" evidence="8">
    <location>
        <begin position="1389"/>
        <end position="1427"/>
    </location>
</feature>
<feature type="compositionally biased region" description="Basic residues" evidence="8">
    <location>
        <begin position="1428"/>
        <end position="1441"/>
    </location>
</feature>
<feature type="binding site" evidence="2">
    <location>
        <position position="425"/>
    </location>
    <ligand>
        <name>2-oxoglutarate</name>
        <dbReference type="ChEBI" id="CHEBI:16810"/>
    </ligand>
</feature>
<feature type="binding site" evidence="7">
    <location>
        <position position="499"/>
    </location>
    <ligand>
        <name>Fe cation</name>
        <dbReference type="ChEBI" id="CHEBI:24875"/>
        <note>catalytic</note>
    </ligand>
</feature>
<feature type="binding site" evidence="2">
    <location>
        <position position="501"/>
    </location>
    <ligand>
        <name>Fe cation</name>
        <dbReference type="ChEBI" id="CHEBI:24875"/>
        <note>catalytic</note>
    </ligand>
</feature>
<feature type="binding site" evidence="2">
    <location>
        <position position="507"/>
    </location>
    <ligand>
        <name>2-oxoglutarate</name>
        <dbReference type="ChEBI" id="CHEBI:16810"/>
    </ligand>
</feature>
<feature type="binding site" evidence="2">
    <location>
        <position position="509"/>
    </location>
    <ligand>
        <name>2-oxoglutarate</name>
        <dbReference type="ChEBI" id="CHEBI:16810"/>
    </ligand>
</feature>
<feature type="binding site" evidence="2">
    <location>
        <position position="517"/>
    </location>
    <ligand>
        <name>2-oxoglutarate</name>
        <dbReference type="ChEBI" id="CHEBI:16810"/>
    </ligand>
</feature>
<feature type="binding site" evidence="7">
    <location>
        <position position="587"/>
    </location>
    <ligand>
        <name>Fe cation</name>
        <dbReference type="ChEBI" id="CHEBI:24875"/>
        <note>catalytic</note>
    </ligand>
</feature>
<feature type="modified residue" description="N6-acetyllysine" evidence="18">
    <location>
        <position position="832"/>
    </location>
</feature>
<feature type="modified residue" description="Phosphoserine" evidence="3">
    <location>
        <position position="986"/>
    </location>
</feature>
<feature type="modified residue" description="Phosphoserine" evidence="3">
    <location>
        <position position="1328"/>
    </location>
</feature>
<feature type="modified residue" description="Phosphoserine" evidence="3">
    <location>
        <position position="1456"/>
    </location>
</feature>
<feature type="cross-link" description="Glycyl lysine isopeptide (Lys-Gly) (interchain with G-Cter in SUMO2)" evidence="3">
    <location>
        <position position="148"/>
    </location>
</feature>
<feature type="cross-link" description="Glycyl lysine isopeptide (Lys-Gly) (interchain with G-Cter in SUMO2)" evidence="3">
    <location>
        <position position="204"/>
    </location>
</feature>
<feature type="cross-link" description="Glycyl lysine isopeptide (Lys-Gly) (interchain with G-Cter in SUMO2)" evidence="3">
    <location>
        <position position="209"/>
    </location>
</feature>
<feature type="cross-link" description="Glycyl lysine isopeptide (Lys-Gly) (interchain with G-Cter in SUMO2)" evidence="3">
    <location>
        <position position="242"/>
    </location>
</feature>
<feature type="cross-link" description="Glycyl lysine isopeptide (Lys-Gly) (interchain with G-Cter in SUMO2)" evidence="3">
    <location>
        <position position="274"/>
    </location>
</feature>
<feature type="cross-link" description="Glycyl lysine isopeptide (Lys-Gly) (interchain with G-Cter in SUMO2)" evidence="3">
    <location>
        <position position="278"/>
    </location>
</feature>
<feature type="cross-link" description="Glycyl lysine isopeptide (Lys-Gly) (interchain with G-Cter in SUMO2)" evidence="3">
    <location>
        <position position="769"/>
    </location>
</feature>
<feature type="cross-link" description="Glycyl lysine isopeptide (Lys-Gly) (interchain with G-Cter in SUMO2)" evidence="3">
    <location>
        <position position="1450"/>
    </location>
</feature>
<feature type="splice variant" id="VSP_026409" description="In isoform 2." evidence="16">
    <original>DWVQCDGSCNQWFHQVCVGVSPEMAEKEDYICVRCTGKDAPSRK</original>
    <variation>SEVWAIEDALSPNSETL</variation>
    <location>
        <begin position="1501"/>
        <end position="1544"/>
    </location>
</feature>
<feature type="mutagenesis site" description="Abolishes enzymatic activity." evidence="12">
    <original>H</original>
    <variation>A</variation>
    <location>
        <position position="499"/>
    </location>
</feature>
<feature type="sequence conflict" description="In Ref. 2; BAD90482." evidence="17" ref="2">
    <original>P</original>
    <variation>S</variation>
    <location>
        <position position="28"/>
    </location>
</feature>
<feature type="sequence conflict" description="In Ref. 4; BAC30898." evidence="17" ref="4">
    <original>E</original>
    <variation>Q</variation>
    <location>
        <position position="139"/>
    </location>
</feature>
<feature type="sequence conflict" description="In Ref. 1; AAL92848/AAL92849." evidence="17" ref="1">
    <original>N</original>
    <variation>Y</variation>
    <location>
        <position position="761"/>
    </location>
</feature>
<feature type="sequence conflict" description="In Ref. 1; AAL92848/AAL92849." evidence="17" ref="1">
    <original>K</original>
    <variation>R</variation>
    <location>
        <position position="1428"/>
    </location>
</feature>
<feature type="helix" evidence="19">
    <location>
        <begin position="97"/>
        <end position="114"/>
    </location>
</feature>
<feature type="strand" evidence="19">
    <location>
        <begin position="122"/>
        <end position="127"/>
    </location>
</feature>
<feature type="helix" evidence="19">
    <location>
        <begin position="130"/>
        <end position="140"/>
    </location>
</feature>
<feature type="helix" evidence="19">
    <location>
        <begin position="143"/>
        <end position="148"/>
    </location>
</feature>
<feature type="turn" evidence="19">
    <location>
        <begin position="149"/>
        <end position="151"/>
    </location>
</feature>
<feature type="helix" evidence="19">
    <location>
        <begin position="152"/>
        <end position="158"/>
    </location>
</feature>
<feature type="strand" evidence="19">
    <location>
        <begin position="163"/>
        <end position="165"/>
    </location>
</feature>
<feature type="helix" evidence="19">
    <location>
        <begin position="166"/>
        <end position="177"/>
    </location>
</feature>
<feature type="helix" evidence="19">
    <location>
        <begin position="179"/>
        <end position="187"/>
    </location>
</feature>
<protein>
    <recommendedName>
        <fullName>Lysine-specific demethylase 5B</fullName>
        <ecNumber evidence="12">1.14.11.67</ecNumber>
    </recommendedName>
    <alternativeName>
        <fullName>Histone demethylase JARID1B</fullName>
    </alternativeName>
    <alternativeName>
        <fullName>Jumonji/ARID domain-containing protein 1B</fullName>
    </alternativeName>
    <alternativeName>
        <fullName>PLU-1</fullName>
    </alternativeName>
    <alternativeName>
        <fullName evidence="17">[histone H3]-trimethyl-L-lysine(4) demethylase 5B</fullName>
    </alternativeName>
</protein>